<accession>Q9LTJ8</accession>
<accession>Q0WLQ6</accession>
<accession>Q8L791</accession>
<keyword id="KW-0238">DNA-binding</keyword>
<keyword id="KW-0539">Nucleus</keyword>
<keyword id="KW-1185">Reference proteome</keyword>
<keyword id="KW-0677">Repeat</keyword>
<keyword id="KW-0804">Transcription</keyword>
<keyword id="KW-0805">Transcription regulation</keyword>
<sequence length="746" mass="82656">MNGEGISDGLSAERKVEIRVRKNGRKDKVIVEKSAAQGLPEGWIKKLEITNRSGRKTRRDPFFIDPKSEYIFQSFKDASRYVETGNIGHYARKLKESDIEDDDSGNGKTVLRLEYVDKRSADDVLEKEKTIDDVRRSKRRNLSSSDEHSKNCKMTSDLSIVTSQVLEDLGKKEEVKDPIEKQLIAKRVTRSQTKASTTEEVVVDLKRNLSSSNAKSEKDSVNSSVRSQKPKKEAVMKEEEEQDSSEKRITRSKVEEKKNELSNSVARRTSKRLAGIELEPTPELKTRAKVQRIVPLDDEPTPELKTRTKVQRVVPPDDEPTPELKTRTKIQRIVPPDDEPTLELKTRTKVQRILPPDDELTPELKSRTKVQRIVPPDDELTPEFKTRTKVQQRIPPDDGRAGKCKQPVNHVTTSGSKKTEIPLNKEVAQSCNEQSSQKPHAAAATSNNRVSADSAVGIQNIGKAVGRKPSKDKKTLKSPLIVYELNPVFHLDGYKQKEEMSPVSPLSCQTSATKCEKTAAGKRVGRSSPKANLTTSVKPTQISPLRSPNKGKQPHPSDSGSAIQRRNKLANEYSNSSVVRGTCSEVMEKSTNSFSSAFDSTLADLCKDPCIAFAIKTLTGESLCLLNTPAISSNPINNHTKQKGVSFTPETPGNVNTCSEKLVFPSPPPGANIWQDPCIDFAIKTLTGAIPIGLDEPDTKSKSQGMTSTTAATQEAKGRQNNCDYMTNKTVGKPDDLRFTQSFSKD</sequence>
<dbReference type="EMBL" id="AB025603">
    <property type="protein sequence ID" value="BAA97466.1"/>
    <property type="molecule type" value="Genomic_DNA"/>
</dbReference>
<dbReference type="EMBL" id="CP002688">
    <property type="protein sequence ID" value="AED96188.1"/>
    <property type="molecule type" value="Genomic_DNA"/>
</dbReference>
<dbReference type="EMBL" id="CP002688">
    <property type="protein sequence ID" value="AED96189.1"/>
    <property type="molecule type" value="Genomic_DNA"/>
</dbReference>
<dbReference type="EMBL" id="CP002688">
    <property type="protein sequence ID" value="ANM69599.1"/>
    <property type="molecule type" value="Genomic_DNA"/>
</dbReference>
<dbReference type="EMBL" id="AY136403">
    <property type="protein sequence ID" value="AAM97069.1"/>
    <property type="molecule type" value="mRNA"/>
</dbReference>
<dbReference type="EMBL" id="BT000226">
    <property type="protein sequence ID" value="AAN15545.1"/>
    <property type="molecule type" value="mRNA"/>
</dbReference>
<dbReference type="EMBL" id="AK230136">
    <property type="protein sequence ID" value="BAF01951.1"/>
    <property type="status" value="ALT_FRAME"/>
    <property type="molecule type" value="mRNA"/>
</dbReference>
<dbReference type="RefSeq" id="NP_001190520.1">
    <property type="nucleotide sequence ID" value="NM_001203591.2"/>
</dbReference>
<dbReference type="RefSeq" id="NP_001331264.1">
    <property type="nucleotide sequence ID" value="NM_001344990.1"/>
</dbReference>
<dbReference type="RefSeq" id="NP_200036.1">
    <property type="nucleotide sequence ID" value="NM_124602.4"/>
</dbReference>
<dbReference type="BioGRID" id="20544">
    <property type="interactions" value="2"/>
</dbReference>
<dbReference type="FunCoup" id="Q9LTJ8">
    <property type="interactions" value="381"/>
</dbReference>
<dbReference type="IntAct" id="Q9LTJ8">
    <property type="interactions" value="2"/>
</dbReference>
<dbReference type="STRING" id="3702.Q9LTJ8"/>
<dbReference type="GlyGen" id="Q9LTJ8">
    <property type="glycosylation" value="2 sites"/>
</dbReference>
<dbReference type="iPTMnet" id="Q9LTJ8"/>
<dbReference type="PaxDb" id="3702-AT5G52230.2"/>
<dbReference type="ProteomicsDB" id="238518"/>
<dbReference type="EnsemblPlants" id="AT5G52230.1">
    <property type="protein sequence ID" value="AT5G52230.1"/>
    <property type="gene ID" value="AT5G52230"/>
</dbReference>
<dbReference type="EnsemblPlants" id="AT5G52230.2">
    <property type="protein sequence ID" value="AT5G52230.2"/>
    <property type="gene ID" value="AT5G52230"/>
</dbReference>
<dbReference type="EnsemblPlants" id="AT5G52230.3">
    <property type="protein sequence ID" value="AT5G52230.3"/>
    <property type="gene ID" value="AT5G52230"/>
</dbReference>
<dbReference type="GeneID" id="835299"/>
<dbReference type="Gramene" id="AT5G52230.1">
    <property type="protein sequence ID" value="AT5G52230.1"/>
    <property type="gene ID" value="AT5G52230"/>
</dbReference>
<dbReference type="Gramene" id="AT5G52230.2">
    <property type="protein sequence ID" value="AT5G52230.2"/>
    <property type="gene ID" value="AT5G52230"/>
</dbReference>
<dbReference type="Gramene" id="AT5G52230.3">
    <property type="protein sequence ID" value="AT5G52230.3"/>
    <property type="gene ID" value="AT5G52230"/>
</dbReference>
<dbReference type="KEGG" id="ath:AT5G52230"/>
<dbReference type="Araport" id="AT5G52230"/>
<dbReference type="TAIR" id="AT5G52230">
    <property type="gene designation" value="MBD13"/>
</dbReference>
<dbReference type="eggNOG" id="ENOG502QS50">
    <property type="taxonomic scope" value="Eukaryota"/>
</dbReference>
<dbReference type="HOGENOM" id="CLU_443036_0_0_1"/>
<dbReference type="InParanoid" id="Q9LTJ8"/>
<dbReference type="OMA" id="LEMHIEK"/>
<dbReference type="PhylomeDB" id="Q9LTJ8"/>
<dbReference type="PRO" id="PR:Q9LTJ8"/>
<dbReference type="Proteomes" id="UP000006548">
    <property type="component" value="Chromosome 5"/>
</dbReference>
<dbReference type="ExpressionAtlas" id="Q9LTJ8">
    <property type="expression patterns" value="baseline and differential"/>
</dbReference>
<dbReference type="GO" id="GO:0005634">
    <property type="term" value="C:nucleus"/>
    <property type="evidence" value="ECO:0007005"/>
    <property type="project" value="TAIR"/>
</dbReference>
<dbReference type="GO" id="GO:0008327">
    <property type="term" value="F:methyl-CpG binding"/>
    <property type="evidence" value="ECO:0000250"/>
    <property type="project" value="TAIR"/>
</dbReference>
<dbReference type="Gene3D" id="3.30.890.10">
    <property type="entry name" value="Methyl-cpg-binding Protein 2, Chain A"/>
    <property type="match status" value="1"/>
</dbReference>
<dbReference type="InterPro" id="IPR038945">
    <property type="entry name" value="MBD13-like"/>
</dbReference>
<dbReference type="InterPro" id="IPR001739">
    <property type="entry name" value="Methyl_CpG_DNA-bd"/>
</dbReference>
<dbReference type="PANTHER" id="PTHR34067:SF24">
    <property type="entry name" value="METHYL-CPG-BINDING DOMAIN-CONTAINING PROTEIN 13"/>
    <property type="match status" value="1"/>
</dbReference>
<dbReference type="PANTHER" id="PTHR34067">
    <property type="entry name" value="OS04G0193200 PROTEIN"/>
    <property type="match status" value="1"/>
</dbReference>
<dbReference type="PROSITE" id="PS50982">
    <property type="entry name" value="MBD"/>
    <property type="match status" value="1"/>
</dbReference>
<gene>
    <name type="primary">MBD13</name>
    <name type="ordered locus">At5g52230</name>
    <name type="ORF">F17P19.13</name>
</gene>
<reference key="1">
    <citation type="submission" date="1999-04" db="EMBL/GenBank/DDBJ databases">
        <title>Structural analysis of Arabidopsis thaliana chromosome 5. XI.</title>
        <authorList>
            <person name="Kaneko T."/>
            <person name="Katoh T."/>
            <person name="Asamizu E."/>
            <person name="Sato S."/>
            <person name="Nakamura Y."/>
            <person name="Kotani H."/>
            <person name="Tabata S."/>
        </authorList>
    </citation>
    <scope>NUCLEOTIDE SEQUENCE [LARGE SCALE GENOMIC DNA]</scope>
    <source>
        <strain>cv. Columbia</strain>
    </source>
</reference>
<reference key="2">
    <citation type="journal article" date="2017" name="Plant J.">
        <title>Araport11: a complete reannotation of the Arabidopsis thaliana reference genome.</title>
        <authorList>
            <person name="Cheng C.Y."/>
            <person name="Krishnakumar V."/>
            <person name="Chan A.P."/>
            <person name="Thibaud-Nissen F."/>
            <person name="Schobel S."/>
            <person name="Town C.D."/>
        </authorList>
    </citation>
    <scope>GENOME REANNOTATION</scope>
    <source>
        <strain>cv. Columbia</strain>
    </source>
</reference>
<reference key="3">
    <citation type="journal article" date="2003" name="Science">
        <title>Empirical analysis of transcriptional activity in the Arabidopsis genome.</title>
        <authorList>
            <person name="Yamada K."/>
            <person name="Lim J."/>
            <person name="Dale J.M."/>
            <person name="Chen H."/>
            <person name="Shinn P."/>
            <person name="Palm C.J."/>
            <person name="Southwick A.M."/>
            <person name="Wu H.C."/>
            <person name="Kim C.J."/>
            <person name="Nguyen M."/>
            <person name="Pham P.K."/>
            <person name="Cheuk R.F."/>
            <person name="Karlin-Newmann G."/>
            <person name="Liu S.X."/>
            <person name="Lam B."/>
            <person name="Sakano H."/>
            <person name="Wu T."/>
            <person name="Yu G."/>
            <person name="Miranda M."/>
            <person name="Quach H.L."/>
            <person name="Tripp M."/>
            <person name="Chang C.H."/>
            <person name="Lee J.M."/>
            <person name="Toriumi M.J."/>
            <person name="Chan M.M."/>
            <person name="Tang C.C."/>
            <person name="Onodera C.S."/>
            <person name="Deng J.M."/>
            <person name="Akiyama K."/>
            <person name="Ansari Y."/>
            <person name="Arakawa T."/>
            <person name="Banh J."/>
            <person name="Banno F."/>
            <person name="Bowser L."/>
            <person name="Brooks S.Y."/>
            <person name="Carninci P."/>
            <person name="Chao Q."/>
            <person name="Choy N."/>
            <person name="Enju A."/>
            <person name="Goldsmith A.D."/>
            <person name="Gurjal M."/>
            <person name="Hansen N.F."/>
            <person name="Hayashizaki Y."/>
            <person name="Johnson-Hopson C."/>
            <person name="Hsuan V.W."/>
            <person name="Iida K."/>
            <person name="Karnes M."/>
            <person name="Khan S."/>
            <person name="Koesema E."/>
            <person name="Ishida J."/>
            <person name="Jiang P.X."/>
            <person name="Jones T."/>
            <person name="Kawai J."/>
            <person name="Kamiya A."/>
            <person name="Meyers C."/>
            <person name="Nakajima M."/>
            <person name="Narusaka M."/>
            <person name="Seki M."/>
            <person name="Sakurai T."/>
            <person name="Satou M."/>
            <person name="Tamse R."/>
            <person name="Vaysberg M."/>
            <person name="Wallender E.K."/>
            <person name="Wong C."/>
            <person name="Yamamura Y."/>
            <person name="Yuan S."/>
            <person name="Shinozaki K."/>
            <person name="Davis R.W."/>
            <person name="Theologis A."/>
            <person name="Ecker J.R."/>
        </authorList>
    </citation>
    <scope>NUCLEOTIDE SEQUENCE [LARGE SCALE MRNA]</scope>
    <source>
        <strain>cv. Columbia</strain>
    </source>
</reference>
<reference key="4">
    <citation type="submission" date="2006-07" db="EMBL/GenBank/DDBJ databases">
        <title>Large-scale analysis of RIKEN Arabidopsis full-length (RAFL) cDNAs.</title>
        <authorList>
            <person name="Totoki Y."/>
            <person name="Seki M."/>
            <person name="Ishida J."/>
            <person name="Nakajima M."/>
            <person name="Enju A."/>
            <person name="Kamiya A."/>
            <person name="Narusaka M."/>
            <person name="Shin-i T."/>
            <person name="Nakagawa M."/>
            <person name="Sakamoto N."/>
            <person name="Oishi K."/>
            <person name="Kohara Y."/>
            <person name="Kobayashi M."/>
            <person name="Toyoda A."/>
            <person name="Sakaki Y."/>
            <person name="Sakurai T."/>
            <person name="Iida K."/>
            <person name="Akiyama K."/>
            <person name="Satou M."/>
            <person name="Toyoda T."/>
            <person name="Konagaya A."/>
            <person name="Carninci P."/>
            <person name="Kawai J."/>
            <person name="Hayashizaki Y."/>
            <person name="Shinozaki K."/>
        </authorList>
    </citation>
    <scope>NUCLEOTIDE SEQUENCE [LARGE SCALE MRNA] OF 186-746</scope>
    <source>
        <strain>cv. Columbia</strain>
    </source>
</reference>
<reference key="5">
    <citation type="journal article" date="2005" name="Plant Physiol.">
        <title>Evolutionary divergence of monocot and dicot methyl-CpG-binding domain proteins.</title>
        <authorList>
            <person name="Springer N.M."/>
            <person name="Kaeppler S.M."/>
        </authorList>
    </citation>
    <scope>GENE FAMILY</scope>
</reference>
<reference key="6">
    <citation type="journal article" date="2007" name="Trends Plant Sci.">
        <title>Methyl-CpG-binding domain proteins in plants: interpreters of DNA methylation.</title>
        <authorList>
            <person name="Zemach A."/>
            <person name="Grafi G."/>
        </authorList>
    </citation>
    <scope>REVIEW</scope>
</reference>
<protein>
    <recommendedName>
        <fullName>Methyl-CpG-binding domain-containing protein 13</fullName>
        <shortName>AtMBD13</shortName>
        <shortName>MBD13</shortName>
    </recommendedName>
    <alternativeName>
        <fullName>Methyl-CpG-binding protein MBD13</fullName>
    </alternativeName>
</protein>
<organism>
    <name type="scientific">Arabidopsis thaliana</name>
    <name type="common">Mouse-ear cress</name>
    <dbReference type="NCBI Taxonomy" id="3702"/>
    <lineage>
        <taxon>Eukaryota</taxon>
        <taxon>Viridiplantae</taxon>
        <taxon>Streptophyta</taxon>
        <taxon>Embryophyta</taxon>
        <taxon>Tracheophyta</taxon>
        <taxon>Spermatophyta</taxon>
        <taxon>Magnoliopsida</taxon>
        <taxon>eudicotyledons</taxon>
        <taxon>Gunneridae</taxon>
        <taxon>Pentapetalae</taxon>
        <taxon>rosids</taxon>
        <taxon>malvids</taxon>
        <taxon>Brassicales</taxon>
        <taxon>Brassicaceae</taxon>
        <taxon>Camelineae</taxon>
        <taxon>Arabidopsis</taxon>
    </lineage>
</organism>
<name>MBD13_ARATH</name>
<proteinExistence type="evidence at transcript level"/>
<feature type="chain" id="PRO_0000405289" description="Methyl-CpG-binding domain-containing protein 13">
    <location>
        <begin position="1"/>
        <end position="746"/>
    </location>
</feature>
<feature type="domain" description="MBD" evidence="2">
    <location>
        <begin position="29"/>
        <end position="104"/>
    </location>
</feature>
<feature type="region of interest" description="Disordered" evidence="3">
    <location>
        <begin position="131"/>
        <end position="157"/>
    </location>
</feature>
<feature type="region of interest" description="Disordered" evidence="3">
    <location>
        <begin position="169"/>
        <end position="283"/>
    </location>
</feature>
<feature type="region of interest" description="Disordered" evidence="3">
    <location>
        <begin position="295"/>
        <end position="328"/>
    </location>
</feature>
<feature type="region of interest" description="Disordered" evidence="3">
    <location>
        <begin position="348"/>
        <end position="479"/>
    </location>
</feature>
<feature type="region of interest" description="Disordered" evidence="3">
    <location>
        <begin position="518"/>
        <end position="562"/>
    </location>
</feature>
<feature type="region of interest" description="Disordered" evidence="3">
    <location>
        <begin position="696"/>
        <end position="746"/>
    </location>
</feature>
<feature type="short sequence motif" description="Nuclear localization signal" evidence="1">
    <location>
        <begin position="13"/>
        <end position="20"/>
    </location>
</feature>
<feature type="short sequence motif" description="Nuclear localization signal" evidence="1">
    <location>
        <begin position="44"/>
        <end position="51"/>
    </location>
</feature>
<feature type="short sequence motif" description="Nuclear localization signal" evidence="1">
    <location>
        <begin position="256"/>
        <end position="263"/>
    </location>
</feature>
<feature type="compositionally biased region" description="Basic and acidic residues" evidence="3">
    <location>
        <begin position="169"/>
        <end position="180"/>
    </location>
</feature>
<feature type="compositionally biased region" description="Polar residues" evidence="3">
    <location>
        <begin position="190"/>
        <end position="199"/>
    </location>
</feature>
<feature type="compositionally biased region" description="Basic and acidic residues" evidence="3">
    <location>
        <begin position="244"/>
        <end position="260"/>
    </location>
</feature>
<feature type="compositionally biased region" description="Polar residues" evidence="3">
    <location>
        <begin position="427"/>
        <end position="451"/>
    </location>
</feature>
<feature type="compositionally biased region" description="Basic residues" evidence="3">
    <location>
        <begin position="465"/>
        <end position="476"/>
    </location>
</feature>
<feature type="compositionally biased region" description="Polar residues" evidence="3">
    <location>
        <begin position="529"/>
        <end position="546"/>
    </location>
</feature>
<feature type="compositionally biased region" description="Polar residues" evidence="3">
    <location>
        <begin position="702"/>
        <end position="730"/>
    </location>
</feature>
<feature type="compositionally biased region" description="Basic and acidic residues" evidence="3">
    <location>
        <begin position="732"/>
        <end position="746"/>
    </location>
</feature>
<feature type="sequence conflict" description="In Ref. 3; AAM97069/AAN15545." evidence="4" ref="3">
    <original>D</original>
    <variation>G</variation>
    <location>
        <position position="8"/>
    </location>
</feature>
<evidence type="ECO:0000250" key="1"/>
<evidence type="ECO:0000255" key="2">
    <source>
        <dbReference type="PROSITE-ProRule" id="PRU00338"/>
    </source>
</evidence>
<evidence type="ECO:0000256" key="3">
    <source>
        <dbReference type="SAM" id="MobiDB-lite"/>
    </source>
</evidence>
<evidence type="ECO:0000305" key="4"/>
<comment type="function">
    <text evidence="1">Probable transcriptional regulator.</text>
</comment>
<comment type="subcellular location">
    <subcellularLocation>
        <location evidence="1">Nucleus</location>
    </subcellularLocation>
</comment>
<comment type="domain">
    <text evidence="1">The methyl-CpG-binding domain (MBD) functions both in binding to methylated DNA and in protein interactions.</text>
</comment>
<comment type="sequence caution" evidence="4">
    <conflict type="frameshift">
        <sequence resource="EMBL-CDS" id="BAF01951"/>
    </conflict>
</comment>